<evidence type="ECO:0000255" key="1">
    <source>
        <dbReference type="HAMAP-Rule" id="MF_00505"/>
    </source>
</evidence>
<accession>A8AJX0</accession>
<gene>
    <name evidence="1" type="primary">htpG</name>
    <name type="ordered locus">CKO_02676</name>
</gene>
<keyword id="KW-0067">ATP-binding</keyword>
<keyword id="KW-0143">Chaperone</keyword>
<keyword id="KW-0963">Cytoplasm</keyword>
<keyword id="KW-0547">Nucleotide-binding</keyword>
<keyword id="KW-1185">Reference proteome</keyword>
<keyword id="KW-0346">Stress response</keyword>
<protein>
    <recommendedName>
        <fullName evidence="1">Chaperone protein HtpG</fullName>
    </recommendedName>
    <alternativeName>
        <fullName evidence="1">Heat shock protein HtpG</fullName>
    </alternativeName>
    <alternativeName>
        <fullName evidence="1">High temperature protein G</fullName>
    </alternativeName>
</protein>
<comment type="function">
    <text evidence="1">Molecular chaperone. Has ATPase activity.</text>
</comment>
<comment type="subunit">
    <text evidence="1">Homodimer.</text>
</comment>
<comment type="subcellular location">
    <subcellularLocation>
        <location evidence="1">Cytoplasm</location>
    </subcellularLocation>
</comment>
<comment type="similarity">
    <text evidence="1">Belongs to the heat shock protein 90 family.</text>
</comment>
<sequence>MKGQETRGFQSEVKQLLHLMIHSLYSNKEIFLRELISNASDAADKLRFRALSNPDLYEGDGELRVRVSFDKDKRTLTIADNGVGMNRDDVIDHLGTIAKSGTKSFLESMGSDQAKDSQLIGQFGVGFYSAFIVADKVTVRTRAAGDKPENGVFWESAGEGEYTVADITKDDRGTEITLHLREGEDEFLDDWRVRSIISKYSDHIALPVEIEKQEEKDGETIVSWEKINKAQALWTRNKSEIKDDEYNEFYKHIAHDFTDPLTWSHNRVEGKQEYTSLLYIPSQAPWDMWNRDHKHGLKLYVQRVFIMDDAEQFMPNYLRFVRGLIDSNDLPLNVSREILQDSTVTRNLRSALTKRVLQMLEKLAKDDAEKYQTFWKQFGLVLKEGPAEDHANQEAIAKLMRFASTHTDSSAQTVSLEDYISRMKEGQEKIYYITADSYAAAKSSPHLELLRKKGIEVLLLSDRIDEWMMNYLTEFDGKAFQSVSKVDESLEKLADEVDESAKEAEKALTPFVERVKTLLGDRVKEVRLTHRLTDTPAIVTTDADEMSTQMAKLFAAAGQAVPEVKYIFELNPDHVLVKRTADTQDEAQFNEWVELLLDQALFAERGTLEDPNQFIRRMNQLLVS</sequence>
<dbReference type="EMBL" id="CP000822">
    <property type="protein sequence ID" value="ABV13783.1"/>
    <property type="molecule type" value="Genomic_DNA"/>
</dbReference>
<dbReference type="RefSeq" id="WP_012133501.1">
    <property type="nucleotide sequence ID" value="NC_009792.1"/>
</dbReference>
<dbReference type="SMR" id="A8AJX0"/>
<dbReference type="STRING" id="290338.CKO_02676"/>
<dbReference type="GeneID" id="45136535"/>
<dbReference type="KEGG" id="cko:CKO_02676"/>
<dbReference type="HOGENOM" id="CLU_006684_3_0_6"/>
<dbReference type="OrthoDB" id="9802640at2"/>
<dbReference type="Proteomes" id="UP000008148">
    <property type="component" value="Chromosome"/>
</dbReference>
<dbReference type="GO" id="GO:0005737">
    <property type="term" value="C:cytoplasm"/>
    <property type="evidence" value="ECO:0007669"/>
    <property type="project" value="UniProtKB-SubCell"/>
</dbReference>
<dbReference type="GO" id="GO:0005524">
    <property type="term" value="F:ATP binding"/>
    <property type="evidence" value="ECO:0007669"/>
    <property type="project" value="UniProtKB-UniRule"/>
</dbReference>
<dbReference type="GO" id="GO:0016887">
    <property type="term" value="F:ATP hydrolysis activity"/>
    <property type="evidence" value="ECO:0007669"/>
    <property type="project" value="InterPro"/>
</dbReference>
<dbReference type="GO" id="GO:0140662">
    <property type="term" value="F:ATP-dependent protein folding chaperone"/>
    <property type="evidence" value="ECO:0007669"/>
    <property type="project" value="InterPro"/>
</dbReference>
<dbReference type="GO" id="GO:0051082">
    <property type="term" value="F:unfolded protein binding"/>
    <property type="evidence" value="ECO:0007669"/>
    <property type="project" value="UniProtKB-UniRule"/>
</dbReference>
<dbReference type="CDD" id="cd16927">
    <property type="entry name" value="HATPase_Hsp90-like"/>
    <property type="match status" value="1"/>
</dbReference>
<dbReference type="FunFam" id="1.20.120.790:FF:000002">
    <property type="entry name" value="Molecular chaperone HtpG"/>
    <property type="match status" value="1"/>
</dbReference>
<dbReference type="FunFam" id="3.30.230.80:FF:000002">
    <property type="entry name" value="Molecular chaperone HtpG"/>
    <property type="match status" value="1"/>
</dbReference>
<dbReference type="FunFam" id="3.30.565.10:FF:000009">
    <property type="entry name" value="Molecular chaperone HtpG"/>
    <property type="match status" value="1"/>
</dbReference>
<dbReference type="FunFam" id="3.40.50.11260:FF:000002">
    <property type="entry name" value="Molecular chaperone HtpG"/>
    <property type="match status" value="1"/>
</dbReference>
<dbReference type="Gene3D" id="3.30.230.80">
    <property type="match status" value="1"/>
</dbReference>
<dbReference type="Gene3D" id="3.40.50.11260">
    <property type="match status" value="1"/>
</dbReference>
<dbReference type="Gene3D" id="1.20.120.790">
    <property type="entry name" value="Heat shock protein 90, C-terminal domain"/>
    <property type="match status" value="1"/>
</dbReference>
<dbReference type="Gene3D" id="3.30.565.10">
    <property type="entry name" value="Histidine kinase-like ATPase, C-terminal domain"/>
    <property type="match status" value="1"/>
</dbReference>
<dbReference type="HAMAP" id="MF_00505">
    <property type="entry name" value="HSP90"/>
    <property type="match status" value="1"/>
</dbReference>
<dbReference type="InterPro" id="IPR036890">
    <property type="entry name" value="HATPase_C_sf"/>
</dbReference>
<dbReference type="InterPro" id="IPR019805">
    <property type="entry name" value="Heat_shock_protein_90_CS"/>
</dbReference>
<dbReference type="InterPro" id="IPR037196">
    <property type="entry name" value="HSP90_C"/>
</dbReference>
<dbReference type="InterPro" id="IPR001404">
    <property type="entry name" value="Hsp90_fam"/>
</dbReference>
<dbReference type="InterPro" id="IPR020575">
    <property type="entry name" value="Hsp90_N"/>
</dbReference>
<dbReference type="InterPro" id="IPR020568">
    <property type="entry name" value="Ribosomal_Su5_D2-typ_SF"/>
</dbReference>
<dbReference type="NCBIfam" id="NF003555">
    <property type="entry name" value="PRK05218.1"/>
    <property type="match status" value="1"/>
</dbReference>
<dbReference type="PANTHER" id="PTHR11528">
    <property type="entry name" value="HEAT SHOCK PROTEIN 90 FAMILY MEMBER"/>
    <property type="match status" value="1"/>
</dbReference>
<dbReference type="Pfam" id="PF13589">
    <property type="entry name" value="HATPase_c_3"/>
    <property type="match status" value="1"/>
</dbReference>
<dbReference type="Pfam" id="PF00183">
    <property type="entry name" value="HSP90"/>
    <property type="match status" value="1"/>
</dbReference>
<dbReference type="PIRSF" id="PIRSF002583">
    <property type="entry name" value="Hsp90"/>
    <property type="match status" value="1"/>
</dbReference>
<dbReference type="PRINTS" id="PR00775">
    <property type="entry name" value="HEATSHOCK90"/>
</dbReference>
<dbReference type="SMART" id="SM00387">
    <property type="entry name" value="HATPase_c"/>
    <property type="match status" value="1"/>
</dbReference>
<dbReference type="SUPFAM" id="SSF55874">
    <property type="entry name" value="ATPase domain of HSP90 chaperone/DNA topoisomerase II/histidine kinase"/>
    <property type="match status" value="1"/>
</dbReference>
<dbReference type="SUPFAM" id="SSF110942">
    <property type="entry name" value="HSP90 C-terminal domain"/>
    <property type="match status" value="1"/>
</dbReference>
<dbReference type="SUPFAM" id="SSF54211">
    <property type="entry name" value="Ribosomal protein S5 domain 2-like"/>
    <property type="match status" value="1"/>
</dbReference>
<dbReference type="PROSITE" id="PS00298">
    <property type="entry name" value="HSP90"/>
    <property type="match status" value="1"/>
</dbReference>
<reference key="1">
    <citation type="submission" date="2007-08" db="EMBL/GenBank/DDBJ databases">
        <authorList>
            <consortium name="The Citrobacter koseri Genome Sequencing Project"/>
            <person name="McClelland M."/>
            <person name="Sanderson E.K."/>
            <person name="Porwollik S."/>
            <person name="Spieth J."/>
            <person name="Clifton W.S."/>
            <person name="Latreille P."/>
            <person name="Courtney L."/>
            <person name="Wang C."/>
            <person name="Pepin K."/>
            <person name="Bhonagiri V."/>
            <person name="Nash W."/>
            <person name="Johnson M."/>
            <person name="Thiruvilangam P."/>
            <person name="Wilson R."/>
        </authorList>
    </citation>
    <scope>NUCLEOTIDE SEQUENCE [LARGE SCALE GENOMIC DNA]</scope>
    <source>
        <strain>ATCC BAA-895 / CDC 4225-83 / SGSC4696</strain>
    </source>
</reference>
<name>HTPG_CITK8</name>
<proteinExistence type="inferred from homology"/>
<feature type="chain" id="PRO_1000014910" description="Chaperone protein HtpG">
    <location>
        <begin position="1"/>
        <end position="624"/>
    </location>
</feature>
<feature type="region of interest" description="A; substrate-binding" evidence="1">
    <location>
        <begin position="1"/>
        <end position="336"/>
    </location>
</feature>
<feature type="region of interest" description="B" evidence="1">
    <location>
        <begin position="337"/>
        <end position="552"/>
    </location>
</feature>
<feature type="region of interest" description="C" evidence="1">
    <location>
        <begin position="553"/>
        <end position="624"/>
    </location>
</feature>
<organism>
    <name type="scientific">Citrobacter koseri (strain ATCC BAA-895 / CDC 4225-83 / SGSC4696)</name>
    <dbReference type="NCBI Taxonomy" id="290338"/>
    <lineage>
        <taxon>Bacteria</taxon>
        <taxon>Pseudomonadati</taxon>
        <taxon>Pseudomonadota</taxon>
        <taxon>Gammaproteobacteria</taxon>
        <taxon>Enterobacterales</taxon>
        <taxon>Enterobacteriaceae</taxon>
        <taxon>Citrobacter</taxon>
    </lineage>
</organism>